<keyword id="KW-0143">Chaperone</keyword>
<keyword id="KW-0963">Cytoplasm</keyword>
<keyword id="KW-0996">Nickel insertion</keyword>
<keyword id="KW-1185">Reference proteome</keyword>
<comment type="function">
    <text evidence="1">Required for maturation of urease via the functional incorporation of the urease nickel metallocenter.</text>
</comment>
<comment type="subunit">
    <text evidence="1">UreD, UreF and UreG form a complex that acts as a GTP-hydrolysis-dependent molecular chaperone, activating the urease apoprotein by helping to assemble the nickel containing metallocenter of UreC. The UreE protein probably delivers the nickel.</text>
</comment>
<comment type="subcellular location">
    <subcellularLocation>
        <location evidence="1">Cytoplasm</location>
    </subcellularLocation>
</comment>
<comment type="similarity">
    <text evidence="1">Belongs to the UreF family.</text>
</comment>
<feature type="chain" id="PRO_0000344082" description="Urease accessory protein UreF">
    <location>
        <begin position="1"/>
        <end position="240"/>
    </location>
</feature>
<protein>
    <recommendedName>
        <fullName evidence="1">Urease accessory protein UreF</fullName>
    </recommendedName>
</protein>
<sequence>MTTNDAGRIPSAAGGAELAALYRLLTWLSPAFPIGGFSYSSGLEWAVEAGDICDAAALRGWLATMLTDGSGFCDAAFLVHAHRATELDDIKRLSEVAELAAAFVPSRERQLETAAQGRAFIEIARSAWSCAGLDEAVAQCDVVVYPVAVGMVGALHGVPLEPLLHGFLHALVSNWISAGSRLVPLGQTDSQRVLAALEPVVVATADRSLHASLDDIGSATFRADLASLRHETQYTRLFRS</sequence>
<accession>A4YM32</accession>
<reference key="1">
    <citation type="journal article" date="2007" name="Science">
        <title>Legumes symbioses: absence of nod genes in photosynthetic bradyrhizobia.</title>
        <authorList>
            <person name="Giraud E."/>
            <person name="Moulin L."/>
            <person name="Vallenet D."/>
            <person name="Barbe V."/>
            <person name="Cytryn E."/>
            <person name="Avarre J.-C."/>
            <person name="Jaubert M."/>
            <person name="Simon D."/>
            <person name="Cartieaux F."/>
            <person name="Prin Y."/>
            <person name="Bena G."/>
            <person name="Hannibal L."/>
            <person name="Fardoux J."/>
            <person name="Kojadinovic M."/>
            <person name="Vuillet L."/>
            <person name="Lajus A."/>
            <person name="Cruveiller S."/>
            <person name="Rouy Z."/>
            <person name="Mangenot S."/>
            <person name="Segurens B."/>
            <person name="Dossat C."/>
            <person name="Franck W.L."/>
            <person name="Chang W.-S."/>
            <person name="Saunders E."/>
            <person name="Bruce D."/>
            <person name="Richardson P."/>
            <person name="Normand P."/>
            <person name="Dreyfus B."/>
            <person name="Pignol D."/>
            <person name="Stacey G."/>
            <person name="Emerich D."/>
            <person name="Vermeglio A."/>
            <person name="Medigue C."/>
            <person name="Sadowsky M."/>
        </authorList>
    </citation>
    <scope>NUCLEOTIDE SEQUENCE [LARGE SCALE GENOMIC DNA]</scope>
    <source>
        <strain>ORS 278</strain>
    </source>
</reference>
<evidence type="ECO:0000255" key="1">
    <source>
        <dbReference type="HAMAP-Rule" id="MF_01385"/>
    </source>
</evidence>
<dbReference type="EMBL" id="CU234118">
    <property type="protein sequence ID" value="CAL74958.1"/>
    <property type="molecule type" value="Genomic_DNA"/>
</dbReference>
<dbReference type="RefSeq" id="WP_011924207.1">
    <property type="nucleotide sequence ID" value="NC_009445.1"/>
</dbReference>
<dbReference type="SMR" id="A4YM32"/>
<dbReference type="STRING" id="114615.BRADO1044"/>
<dbReference type="KEGG" id="bra:BRADO1044"/>
<dbReference type="eggNOG" id="COG0830">
    <property type="taxonomic scope" value="Bacteria"/>
</dbReference>
<dbReference type="HOGENOM" id="CLU_049215_2_0_5"/>
<dbReference type="OrthoDB" id="9798772at2"/>
<dbReference type="Proteomes" id="UP000001994">
    <property type="component" value="Chromosome"/>
</dbReference>
<dbReference type="GO" id="GO:0005737">
    <property type="term" value="C:cytoplasm"/>
    <property type="evidence" value="ECO:0007669"/>
    <property type="project" value="UniProtKB-SubCell"/>
</dbReference>
<dbReference type="GO" id="GO:0016151">
    <property type="term" value="F:nickel cation binding"/>
    <property type="evidence" value="ECO:0007669"/>
    <property type="project" value="UniProtKB-UniRule"/>
</dbReference>
<dbReference type="Gene3D" id="1.10.4190.10">
    <property type="entry name" value="Urease accessory protein UreF"/>
    <property type="match status" value="1"/>
</dbReference>
<dbReference type="HAMAP" id="MF_01385">
    <property type="entry name" value="UreF"/>
    <property type="match status" value="1"/>
</dbReference>
<dbReference type="InterPro" id="IPR002639">
    <property type="entry name" value="UreF"/>
</dbReference>
<dbReference type="InterPro" id="IPR038277">
    <property type="entry name" value="UreF_sf"/>
</dbReference>
<dbReference type="PANTHER" id="PTHR33620">
    <property type="entry name" value="UREASE ACCESSORY PROTEIN F"/>
    <property type="match status" value="1"/>
</dbReference>
<dbReference type="PANTHER" id="PTHR33620:SF1">
    <property type="entry name" value="UREASE ACCESSORY PROTEIN F"/>
    <property type="match status" value="1"/>
</dbReference>
<dbReference type="Pfam" id="PF01730">
    <property type="entry name" value="UreF"/>
    <property type="match status" value="1"/>
</dbReference>
<dbReference type="PIRSF" id="PIRSF009467">
    <property type="entry name" value="Ureas_acces_UreF"/>
    <property type="match status" value="1"/>
</dbReference>
<name>UREF_BRASO</name>
<gene>
    <name evidence="1" type="primary">ureF</name>
    <name type="ordered locus">BRADO1044</name>
</gene>
<organism>
    <name type="scientific">Bradyrhizobium sp. (strain ORS 278)</name>
    <dbReference type="NCBI Taxonomy" id="114615"/>
    <lineage>
        <taxon>Bacteria</taxon>
        <taxon>Pseudomonadati</taxon>
        <taxon>Pseudomonadota</taxon>
        <taxon>Alphaproteobacteria</taxon>
        <taxon>Hyphomicrobiales</taxon>
        <taxon>Nitrobacteraceae</taxon>
        <taxon>Bradyrhizobium</taxon>
    </lineage>
</organism>
<proteinExistence type="inferred from homology"/>